<sequence>MAKTFSSICFTTLLLVVLFISTEIPKSEAHCDHFLGEAPVYPCKEKACKSVCKEHYHHACKGECEYHGREVHCHCYGDYH</sequence>
<comment type="subcellular location">
    <subcellularLocation>
        <location evidence="1">Secreted</location>
    </subcellularLocation>
</comment>
<comment type="similarity">
    <text evidence="3">Belongs to the DEFL family.</text>
</comment>
<comment type="caution">
    <text evidence="3">Lacks 1 of the 4 disulfide bonds, which are conserved features of the family.</text>
</comment>
<accession>Q56XB0</accession>
<name>DF204_ARATH</name>
<reference key="1">
    <citation type="journal article" date="2000" name="Nature">
        <title>Sequence and analysis of chromosome 3 of the plant Arabidopsis thaliana.</title>
        <authorList>
            <person name="Salanoubat M."/>
            <person name="Lemcke K."/>
            <person name="Rieger M."/>
            <person name="Ansorge W."/>
            <person name="Unseld M."/>
            <person name="Fartmann B."/>
            <person name="Valle G."/>
            <person name="Bloecker H."/>
            <person name="Perez-Alonso M."/>
            <person name="Obermaier B."/>
            <person name="Delseny M."/>
            <person name="Boutry M."/>
            <person name="Grivell L.A."/>
            <person name="Mache R."/>
            <person name="Puigdomenech P."/>
            <person name="De Simone V."/>
            <person name="Choisne N."/>
            <person name="Artiguenave F."/>
            <person name="Robert C."/>
            <person name="Brottier P."/>
            <person name="Wincker P."/>
            <person name="Cattolico L."/>
            <person name="Weissenbach J."/>
            <person name="Saurin W."/>
            <person name="Quetier F."/>
            <person name="Schaefer M."/>
            <person name="Mueller-Auer S."/>
            <person name="Gabel C."/>
            <person name="Fuchs M."/>
            <person name="Benes V."/>
            <person name="Wurmbach E."/>
            <person name="Drzonek H."/>
            <person name="Erfle H."/>
            <person name="Jordan N."/>
            <person name="Bangert S."/>
            <person name="Wiedelmann R."/>
            <person name="Kranz H."/>
            <person name="Voss H."/>
            <person name="Holland R."/>
            <person name="Brandt P."/>
            <person name="Nyakatura G."/>
            <person name="Vezzi A."/>
            <person name="D'Angelo M."/>
            <person name="Pallavicini A."/>
            <person name="Toppo S."/>
            <person name="Simionati B."/>
            <person name="Conrad A."/>
            <person name="Hornischer K."/>
            <person name="Kauer G."/>
            <person name="Loehnert T.-H."/>
            <person name="Nordsiek G."/>
            <person name="Reichelt J."/>
            <person name="Scharfe M."/>
            <person name="Schoen O."/>
            <person name="Bargues M."/>
            <person name="Terol J."/>
            <person name="Climent J."/>
            <person name="Navarro P."/>
            <person name="Collado C."/>
            <person name="Perez-Perez A."/>
            <person name="Ottenwaelder B."/>
            <person name="Duchemin D."/>
            <person name="Cooke R."/>
            <person name="Laudie M."/>
            <person name="Berger-Llauro C."/>
            <person name="Purnelle B."/>
            <person name="Masuy D."/>
            <person name="de Haan M."/>
            <person name="Maarse A.C."/>
            <person name="Alcaraz J.-P."/>
            <person name="Cottet A."/>
            <person name="Casacuberta E."/>
            <person name="Monfort A."/>
            <person name="Argiriou A."/>
            <person name="Flores M."/>
            <person name="Liguori R."/>
            <person name="Vitale D."/>
            <person name="Mannhaupt G."/>
            <person name="Haase D."/>
            <person name="Schoof H."/>
            <person name="Rudd S."/>
            <person name="Zaccaria P."/>
            <person name="Mewes H.-W."/>
            <person name="Mayer K.F.X."/>
            <person name="Kaul S."/>
            <person name="Town C.D."/>
            <person name="Koo H.L."/>
            <person name="Tallon L.J."/>
            <person name="Jenkins J."/>
            <person name="Rooney T."/>
            <person name="Rizzo M."/>
            <person name="Walts A."/>
            <person name="Utterback T."/>
            <person name="Fujii C.Y."/>
            <person name="Shea T.P."/>
            <person name="Creasy T.H."/>
            <person name="Haas B."/>
            <person name="Maiti R."/>
            <person name="Wu D."/>
            <person name="Peterson J."/>
            <person name="Van Aken S."/>
            <person name="Pai G."/>
            <person name="Militscher J."/>
            <person name="Sellers P."/>
            <person name="Gill J.E."/>
            <person name="Feldblyum T.V."/>
            <person name="Preuss D."/>
            <person name="Lin X."/>
            <person name="Nierman W.C."/>
            <person name="Salzberg S.L."/>
            <person name="White O."/>
            <person name="Venter J.C."/>
            <person name="Fraser C.M."/>
            <person name="Kaneko T."/>
            <person name="Nakamura Y."/>
            <person name="Sato S."/>
            <person name="Kato T."/>
            <person name="Asamizu E."/>
            <person name="Sasamoto S."/>
            <person name="Kimura T."/>
            <person name="Idesawa K."/>
            <person name="Kawashima K."/>
            <person name="Kishida Y."/>
            <person name="Kiyokawa C."/>
            <person name="Kohara M."/>
            <person name="Matsumoto M."/>
            <person name="Matsuno A."/>
            <person name="Muraki A."/>
            <person name="Nakayama S."/>
            <person name="Nakazaki N."/>
            <person name="Shinpo S."/>
            <person name="Takeuchi C."/>
            <person name="Wada T."/>
            <person name="Watanabe A."/>
            <person name="Yamada M."/>
            <person name="Yasuda M."/>
            <person name="Tabata S."/>
        </authorList>
    </citation>
    <scope>NUCLEOTIDE SEQUENCE [LARGE SCALE GENOMIC DNA]</scope>
    <source>
        <strain>cv. Columbia</strain>
    </source>
</reference>
<reference key="2">
    <citation type="journal article" date="2017" name="Plant J.">
        <title>Araport11: a complete reannotation of the Arabidopsis thaliana reference genome.</title>
        <authorList>
            <person name="Cheng C.Y."/>
            <person name="Krishnakumar V."/>
            <person name="Chan A.P."/>
            <person name="Thibaud-Nissen F."/>
            <person name="Schobel S."/>
            <person name="Town C.D."/>
        </authorList>
    </citation>
    <scope>GENOME REANNOTATION</scope>
    <source>
        <strain>cv. Columbia</strain>
    </source>
</reference>
<reference key="3">
    <citation type="submission" date="2005-03" db="EMBL/GenBank/DDBJ databases">
        <title>Large-scale analysis of RIKEN Arabidopsis full-length (RAFL) cDNAs.</title>
        <authorList>
            <person name="Totoki Y."/>
            <person name="Seki M."/>
            <person name="Ishida J."/>
            <person name="Nakajima M."/>
            <person name="Enju A."/>
            <person name="Kamiya A."/>
            <person name="Narusaka M."/>
            <person name="Shin-i T."/>
            <person name="Nakagawa M."/>
            <person name="Sakamoto N."/>
            <person name="Oishi K."/>
            <person name="Kohara Y."/>
            <person name="Kobayashi M."/>
            <person name="Toyoda A."/>
            <person name="Sakaki Y."/>
            <person name="Sakurai T."/>
            <person name="Iida K."/>
            <person name="Akiyama K."/>
            <person name="Satou M."/>
            <person name="Toyoda T."/>
            <person name="Konagaya A."/>
            <person name="Carninci P."/>
            <person name="Kawai J."/>
            <person name="Hayashizaki Y."/>
            <person name="Shinozaki K."/>
        </authorList>
    </citation>
    <scope>NUCLEOTIDE SEQUENCE [LARGE SCALE MRNA]</scope>
    <source>
        <strain>cv. Columbia</strain>
    </source>
</reference>
<reference key="4">
    <citation type="journal article" date="2005" name="Plant Physiol.">
        <title>Genome organization of more than 300 defensin-like genes in Arabidopsis.</title>
        <authorList>
            <person name="Silverstein K.A.T."/>
            <person name="Graham M.A."/>
            <person name="Paape T.D."/>
            <person name="VandenBosch K.A."/>
        </authorList>
    </citation>
    <scope>GENE FAMILY</scope>
</reference>
<keyword id="KW-0002">3D-structure</keyword>
<keyword id="KW-0929">Antimicrobial</keyword>
<keyword id="KW-1015">Disulfide bond</keyword>
<keyword id="KW-0295">Fungicide</keyword>
<keyword id="KW-0611">Plant defense</keyword>
<keyword id="KW-1185">Reference proteome</keyword>
<keyword id="KW-0964">Secreted</keyword>
<keyword id="KW-0732">Signal</keyword>
<evidence type="ECO:0000250" key="1"/>
<evidence type="ECO:0000255" key="2"/>
<evidence type="ECO:0000305" key="3"/>
<evidence type="ECO:0007829" key="4">
    <source>
        <dbReference type="PDB" id="7JN6"/>
    </source>
</evidence>
<feature type="signal peptide" evidence="2">
    <location>
        <begin position="1"/>
        <end position="29"/>
    </location>
</feature>
<feature type="chain" id="PRO_0000379696" description="Defensin-like protein 204">
    <location>
        <begin position="30"/>
        <end position="80"/>
    </location>
</feature>
<feature type="disulfide bond" evidence="1">
    <location>
        <begin position="43"/>
        <end position="64"/>
    </location>
</feature>
<feature type="disulfide bond" evidence="1">
    <location>
        <begin position="48"/>
        <end position="73"/>
    </location>
</feature>
<feature type="disulfide bond" evidence="1">
    <location>
        <begin position="52"/>
        <end position="75"/>
    </location>
</feature>
<feature type="strand" evidence="4">
    <location>
        <begin position="33"/>
        <end position="38"/>
    </location>
</feature>
<feature type="helix" evidence="4">
    <location>
        <begin position="45"/>
        <end position="55"/>
    </location>
</feature>
<feature type="strand" evidence="4">
    <location>
        <begin position="59"/>
        <end position="67"/>
    </location>
</feature>
<feature type="strand" evidence="4">
    <location>
        <begin position="70"/>
        <end position="77"/>
    </location>
</feature>
<organism>
    <name type="scientific">Arabidopsis thaliana</name>
    <name type="common">Mouse-ear cress</name>
    <dbReference type="NCBI Taxonomy" id="3702"/>
    <lineage>
        <taxon>Eukaryota</taxon>
        <taxon>Viridiplantae</taxon>
        <taxon>Streptophyta</taxon>
        <taxon>Embryophyta</taxon>
        <taxon>Tracheophyta</taxon>
        <taxon>Spermatophyta</taxon>
        <taxon>Magnoliopsida</taxon>
        <taxon>eudicotyledons</taxon>
        <taxon>Gunneridae</taxon>
        <taxon>Pentapetalae</taxon>
        <taxon>rosids</taxon>
        <taxon>malvids</taxon>
        <taxon>Brassicales</taxon>
        <taxon>Brassicaceae</taxon>
        <taxon>Camelineae</taxon>
        <taxon>Arabidopsis</taxon>
    </lineage>
</organism>
<dbReference type="EMBL" id="AC011620">
    <property type="status" value="NOT_ANNOTATED_CDS"/>
    <property type="molecule type" value="Genomic_DNA"/>
</dbReference>
<dbReference type="EMBL" id="CP002686">
    <property type="protein sequence ID" value="AEE74286.1"/>
    <property type="molecule type" value="Genomic_DNA"/>
</dbReference>
<dbReference type="EMBL" id="AK221765">
    <property type="protein sequence ID" value="BAD93850.1"/>
    <property type="molecule type" value="mRNA"/>
</dbReference>
<dbReference type="RefSeq" id="NP_001030645.1">
    <property type="nucleotide sequence ID" value="NM_001035568.3"/>
</dbReference>
<dbReference type="PDB" id="7JN6">
    <property type="method" value="NMR"/>
    <property type="chains" value="A=29-80"/>
</dbReference>
<dbReference type="PDBsum" id="7JN6"/>
<dbReference type="BMRB" id="Q56XB0"/>
<dbReference type="SMR" id="Q56XB0"/>
<dbReference type="FunCoup" id="Q56XB0">
    <property type="interactions" value="2"/>
</dbReference>
<dbReference type="STRING" id="3702.Q56XB0"/>
<dbReference type="PaxDb" id="3702-AT3G05727.1"/>
<dbReference type="ProteomicsDB" id="224190"/>
<dbReference type="EnsemblPlants" id="AT3G05727.1">
    <property type="protein sequence ID" value="AT3G05727.1"/>
    <property type="gene ID" value="AT3G05727"/>
</dbReference>
<dbReference type="GeneID" id="3768785"/>
<dbReference type="Gramene" id="AT3G05727.1">
    <property type="protein sequence ID" value="AT3G05727.1"/>
    <property type="gene ID" value="AT3G05727"/>
</dbReference>
<dbReference type="KEGG" id="ath:AT3G05727"/>
<dbReference type="Araport" id="AT3G05727"/>
<dbReference type="TAIR" id="AT3G05727">
    <property type="gene designation" value="DEG28"/>
</dbReference>
<dbReference type="eggNOG" id="KOG1075">
    <property type="taxonomic scope" value="Eukaryota"/>
</dbReference>
<dbReference type="HOGENOM" id="CLU_152804_1_0_1"/>
<dbReference type="InParanoid" id="Q56XB0"/>
<dbReference type="OMA" id="CKGECEY"/>
<dbReference type="PhylomeDB" id="Q56XB0"/>
<dbReference type="PRO" id="PR:Q56XB0"/>
<dbReference type="Proteomes" id="UP000006548">
    <property type="component" value="Chromosome 3"/>
</dbReference>
<dbReference type="ExpressionAtlas" id="Q56XB0">
    <property type="expression patterns" value="baseline and differential"/>
</dbReference>
<dbReference type="GO" id="GO:0005576">
    <property type="term" value="C:extracellular region"/>
    <property type="evidence" value="ECO:0007669"/>
    <property type="project" value="UniProtKB-SubCell"/>
</dbReference>
<dbReference type="GO" id="GO:0099503">
    <property type="term" value="C:secretory vesicle"/>
    <property type="evidence" value="ECO:0007005"/>
    <property type="project" value="TAIR"/>
</dbReference>
<dbReference type="GO" id="GO:0050832">
    <property type="term" value="P:defense response to fungus"/>
    <property type="evidence" value="ECO:0007669"/>
    <property type="project" value="UniProtKB-KW"/>
</dbReference>
<dbReference type="GO" id="GO:0031640">
    <property type="term" value="P:killing of cells of another organism"/>
    <property type="evidence" value="ECO:0007669"/>
    <property type="project" value="UniProtKB-KW"/>
</dbReference>
<gene>
    <name type="ordered locus">At3g05727</name>
    <name type="ORF">F18C1</name>
</gene>
<protein>
    <recommendedName>
        <fullName>Defensin-like protein 204</fullName>
    </recommendedName>
</protein>
<proteinExistence type="evidence at protein level"/>